<feature type="chain" id="PRO_1000086850" description="Small ribosomal subunit protein uS17">
    <location>
        <begin position="1"/>
        <end position="82"/>
    </location>
</feature>
<keyword id="KW-0687">Ribonucleoprotein</keyword>
<keyword id="KW-0689">Ribosomal protein</keyword>
<keyword id="KW-0694">RNA-binding</keyword>
<keyword id="KW-0699">rRNA-binding</keyword>
<sequence length="82" mass="9475">MRNIKMPKRLLQGVVISSKADKTVTVKVERKFKHPIYKKFVKVSKKYAAHDSENKYQEGDKVSIIESRPISKTKTWVVVNGE</sequence>
<proteinExistence type="inferred from homology"/>
<name>RS17_RICRO</name>
<protein>
    <recommendedName>
        <fullName evidence="1">Small ribosomal subunit protein uS17</fullName>
    </recommendedName>
    <alternativeName>
        <fullName evidence="2">30S ribosomal protein S17</fullName>
    </alternativeName>
</protein>
<evidence type="ECO:0000255" key="1">
    <source>
        <dbReference type="HAMAP-Rule" id="MF_01345"/>
    </source>
</evidence>
<evidence type="ECO:0000305" key="2"/>
<comment type="function">
    <text evidence="1">One of the primary rRNA binding proteins, it binds specifically to the 5'-end of 16S ribosomal RNA.</text>
</comment>
<comment type="subunit">
    <text evidence="1">Part of the 30S ribosomal subunit.</text>
</comment>
<comment type="similarity">
    <text evidence="1">Belongs to the universal ribosomal protein uS17 family.</text>
</comment>
<gene>
    <name evidence="1" type="primary">rpsQ</name>
    <name type="ordered locus">RrIowa_1188</name>
</gene>
<organism>
    <name type="scientific">Rickettsia rickettsii (strain Iowa)</name>
    <dbReference type="NCBI Taxonomy" id="452659"/>
    <lineage>
        <taxon>Bacteria</taxon>
        <taxon>Pseudomonadati</taxon>
        <taxon>Pseudomonadota</taxon>
        <taxon>Alphaproteobacteria</taxon>
        <taxon>Rickettsiales</taxon>
        <taxon>Rickettsiaceae</taxon>
        <taxon>Rickettsieae</taxon>
        <taxon>Rickettsia</taxon>
        <taxon>spotted fever group</taxon>
    </lineage>
</organism>
<reference key="1">
    <citation type="journal article" date="2008" name="Infect. Immun.">
        <title>Genomic comparison of virulent Rickettsia rickettsii Sheila Smith and avirulent Rickettsia rickettsii Iowa.</title>
        <authorList>
            <person name="Ellison D.W."/>
            <person name="Clark T.R."/>
            <person name="Sturdevant D.E."/>
            <person name="Virtaneva K."/>
            <person name="Porcella S.F."/>
            <person name="Hackstadt T."/>
        </authorList>
    </citation>
    <scope>NUCLEOTIDE SEQUENCE [LARGE SCALE GENOMIC DNA]</scope>
    <source>
        <strain>Iowa</strain>
    </source>
</reference>
<dbReference type="EMBL" id="CP000766">
    <property type="protein sequence ID" value="ABY72961.1"/>
    <property type="molecule type" value="Genomic_DNA"/>
</dbReference>
<dbReference type="SMR" id="B0BUQ1"/>
<dbReference type="KEGG" id="rrj:RrIowa_1188"/>
<dbReference type="eggNOG" id="COG0186">
    <property type="taxonomic scope" value="Bacteria"/>
</dbReference>
<dbReference type="HOGENOM" id="CLU_073626_1_1_5"/>
<dbReference type="Proteomes" id="UP000000796">
    <property type="component" value="Chromosome"/>
</dbReference>
<dbReference type="GO" id="GO:0022627">
    <property type="term" value="C:cytosolic small ribosomal subunit"/>
    <property type="evidence" value="ECO:0007669"/>
    <property type="project" value="TreeGrafter"/>
</dbReference>
<dbReference type="GO" id="GO:0019843">
    <property type="term" value="F:rRNA binding"/>
    <property type="evidence" value="ECO:0007669"/>
    <property type="project" value="UniProtKB-UniRule"/>
</dbReference>
<dbReference type="GO" id="GO:0003735">
    <property type="term" value="F:structural constituent of ribosome"/>
    <property type="evidence" value="ECO:0007669"/>
    <property type="project" value="InterPro"/>
</dbReference>
<dbReference type="GO" id="GO:0006412">
    <property type="term" value="P:translation"/>
    <property type="evidence" value="ECO:0007669"/>
    <property type="project" value="UniProtKB-UniRule"/>
</dbReference>
<dbReference type="CDD" id="cd00364">
    <property type="entry name" value="Ribosomal_uS17"/>
    <property type="match status" value="1"/>
</dbReference>
<dbReference type="Gene3D" id="2.40.50.140">
    <property type="entry name" value="Nucleic acid-binding proteins"/>
    <property type="match status" value="1"/>
</dbReference>
<dbReference type="HAMAP" id="MF_01345_B">
    <property type="entry name" value="Ribosomal_uS17_B"/>
    <property type="match status" value="1"/>
</dbReference>
<dbReference type="InterPro" id="IPR012340">
    <property type="entry name" value="NA-bd_OB-fold"/>
</dbReference>
<dbReference type="InterPro" id="IPR000266">
    <property type="entry name" value="Ribosomal_uS17"/>
</dbReference>
<dbReference type="InterPro" id="IPR019984">
    <property type="entry name" value="Ribosomal_uS17_bact/chlr"/>
</dbReference>
<dbReference type="InterPro" id="IPR019979">
    <property type="entry name" value="Ribosomal_uS17_CS"/>
</dbReference>
<dbReference type="NCBIfam" id="NF004123">
    <property type="entry name" value="PRK05610.1"/>
    <property type="match status" value="1"/>
</dbReference>
<dbReference type="NCBIfam" id="TIGR03635">
    <property type="entry name" value="uS17_bact"/>
    <property type="match status" value="1"/>
</dbReference>
<dbReference type="PANTHER" id="PTHR10744">
    <property type="entry name" value="40S RIBOSOMAL PROTEIN S11 FAMILY MEMBER"/>
    <property type="match status" value="1"/>
</dbReference>
<dbReference type="PANTHER" id="PTHR10744:SF1">
    <property type="entry name" value="SMALL RIBOSOMAL SUBUNIT PROTEIN US17M"/>
    <property type="match status" value="1"/>
</dbReference>
<dbReference type="Pfam" id="PF00366">
    <property type="entry name" value="Ribosomal_S17"/>
    <property type="match status" value="1"/>
</dbReference>
<dbReference type="PRINTS" id="PR00973">
    <property type="entry name" value="RIBOSOMALS17"/>
</dbReference>
<dbReference type="SUPFAM" id="SSF50249">
    <property type="entry name" value="Nucleic acid-binding proteins"/>
    <property type="match status" value="1"/>
</dbReference>
<dbReference type="PROSITE" id="PS00056">
    <property type="entry name" value="RIBOSOMAL_S17"/>
    <property type="match status" value="1"/>
</dbReference>
<accession>B0BUQ1</accession>